<accession>Q5XGE0</accession>
<evidence type="ECO:0000250" key="1"/>
<evidence type="ECO:0000255" key="2"/>
<evidence type="ECO:0000255" key="3">
    <source>
        <dbReference type="PROSITE-ProRule" id="PRU00805"/>
    </source>
</evidence>
<evidence type="ECO:0000256" key="4">
    <source>
        <dbReference type="SAM" id="MobiDB-lite"/>
    </source>
</evidence>
<evidence type="ECO:0000305" key="5"/>
<feature type="chain" id="PRO_0000325888" description="2-oxoglutarate and iron-dependent oxygenase domain-containing protein 3">
    <location>
        <begin position="1"/>
        <end position="317"/>
    </location>
</feature>
<feature type="topological domain" description="Cytoplasmic" evidence="2">
    <location>
        <begin position="1"/>
        <end position="39"/>
    </location>
</feature>
<feature type="transmembrane region" description="Helical; Signal-anchor for type II membrane protein" evidence="2">
    <location>
        <begin position="40"/>
        <end position="60"/>
    </location>
</feature>
<feature type="topological domain" description="Lumenal" evidence="2">
    <location>
        <begin position="61"/>
        <end position="317"/>
    </location>
</feature>
<feature type="domain" description="Fe2OG dioxygenase" evidence="3">
    <location>
        <begin position="205"/>
        <end position="307"/>
    </location>
</feature>
<feature type="region of interest" description="Disordered" evidence="4">
    <location>
        <begin position="1"/>
        <end position="34"/>
    </location>
</feature>
<feature type="active site" evidence="2">
    <location>
        <position position="296"/>
    </location>
</feature>
<feature type="binding site" evidence="3">
    <location>
        <position position="228"/>
    </location>
    <ligand>
        <name>Fe cation</name>
        <dbReference type="ChEBI" id="CHEBI:24875"/>
    </ligand>
</feature>
<feature type="binding site" evidence="3">
    <location>
        <position position="230"/>
    </location>
    <ligand>
        <name>Fe cation</name>
        <dbReference type="ChEBI" id="CHEBI:24875"/>
    </ligand>
</feature>
<feature type="binding site" evidence="3">
    <location>
        <position position="286"/>
    </location>
    <ligand>
        <name>Fe cation</name>
        <dbReference type="ChEBI" id="CHEBI:24875"/>
    </ligand>
</feature>
<feature type="binding site" evidence="3">
    <location>
        <position position="296"/>
    </location>
    <ligand>
        <name>2-oxoglutarate</name>
        <dbReference type="ChEBI" id="CHEBI:16810"/>
    </ligand>
</feature>
<feature type="glycosylation site" description="N-linked (GlcNAc...) asparagine" evidence="2">
    <location>
        <position position="195"/>
    </location>
</feature>
<feature type="glycosylation site" description="N-linked (GlcNAc...) asparagine" evidence="2">
    <location>
        <position position="213"/>
    </location>
</feature>
<feature type="glycosylation site" description="N-linked (GlcNAc...) asparagine" evidence="2">
    <location>
        <position position="265"/>
    </location>
</feature>
<organism>
    <name type="scientific">Xenopus tropicalis</name>
    <name type="common">Western clawed frog</name>
    <name type="synonym">Silurana tropicalis</name>
    <dbReference type="NCBI Taxonomy" id="8364"/>
    <lineage>
        <taxon>Eukaryota</taxon>
        <taxon>Metazoa</taxon>
        <taxon>Chordata</taxon>
        <taxon>Craniata</taxon>
        <taxon>Vertebrata</taxon>
        <taxon>Euteleostomi</taxon>
        <taxon>Amphibia</taxon>
        <taxon>Batrachia</taxon>
        <taxon>Anura</taxon>
        <taxon>Pipoidea</taxon>
        <taxon>Pipidae</taxon>
        <taxon>Xenopodinae</taxon>
        <taxon>Xenopus</taxon>
        <taxon>Silurana</taxon>
    </lineage>
</organism>
<comment type="cofactor">
    <cofactor evidence="3">
        <name>Fe(2+)</name>
        <dbReference type="ChEBI" id="CHEBI:29033"/>
    </cofactor>
    <text evidence="3">Binds 1 Fe(2+) ion per subunit.</text>
</comment>
<comment type="cofactor">
    <cofactor evidence="1">
        <name>L-ascorbate</name>
        <dbReference type="ChEBI" id="CHEBI:38290"/>
    </cofactor>
</comment>
<comment type="subcellular location">
    <subcellularLocation>
        <location evidence="5">Membrane</location>
        <topology evidence="5">Single-pass type II membrane protein</topology>
    </subcellularLocation>
</comment>
<comment type="similarity">
    <text evidence="5">Belongs to the OGFOD3 family.</text>
</comment>
<protein>
    <recommendedName>
        <fullName>2-oxoglutarate and iron-dependent oxygenase domain-containing protein 3</fullName>
    </recommendedName>
</protein>
<gene>
    <name type="primary">ogfod3</name>
</gene>
<dbReference type="EMBL" id="BC084502">
    <property type="protein sequence ID" value="AAH84502.1"/>
    <property type="molecule type" value="mRNA"/>
</dbReference>
<dbReference type="RefSeq" id="NP_001011105.1">
    <property type="nucleotide sequence ID" value="NM_001011105.1"/>
</dbReference>
<dbReference type="SMR" id="Q5XGE0"/>
<dbReference type="FunCoup" id="Q5XGE0">
    <property type="interactions" value="213"/>
</dbReference>
<dbReference type="STRING" id="8364.ENSXETP00000046639"/>
<dbReference type="GlyCosmos" id="Q5XGE0">
    <property type="glycosylation" value="3 sites, No reported glycans"/>
</dbReference>
<dbReference type="PaxDb" id="8364-ENSXETP00000026720"/>
<dbReference type="DNASU" id="496518"/>
<dbReference type="GeneID" id="496518"/>
<dbReference type="KEGG" id="xtr:496518"/>
<dbReference type="AGR" id="Xenbase:XB-GENE-6457975"/>
<dbReference type="CTD" id="79701"/>
<dbReference type="Xenbase" id="XB-GENE-6457975">
    <property type="gene designation" value="ogfod3"/>
</dbReference>
<dbReference type="eggNOG" id="ENOG502QR2P">
    <property type="taxonomic scope" value="Eukaryota"/>
</dbReference>
<dbReference type="InParanoid" id="Q5XGE0"/>
<dbReference type="OMA" id="YESFHYT"/>
<dbReference type="OrthoDB" id="427071at2759"/>
<dbReference type="Proteomes" id="UP000008143">
    <property type="component" value="Chromosome 10"/>
</dbReference>
<dbReference type="GO" id="GO:0016020">
    <property type="term" value="C:membrane"/>
    <property type="evidence" value="ECO:0007669"/>
    <property type="project" value="UniProtKB-SubCell"/>
</dbReference>
<dbReference type="GO" id="GO:0051213">
    <property type="term" value="F:dioxygenase activity"/>
    <property type="evidence" value="ECO:0007669"/>
    <property type="project" value="UniProtKB-KW"/>
</dbReference>
<dbReference type="GO" id="GO:0005506">
    <property type="term" value="F:iron ion binding"/>
    <property type="evidence" value="ECO:0007669"/>
    <property type="project" value="InterPro"/>
</dbReference>
<dbReference type="GO" id="GO:0031418">
    <property type="term" value="F:L-ascorbic acid binding"/>
    <property type="evidence" value="ECO:0007669"/>
    <property type="project" value="UniProtKB-KW"/>
</dbReference>
<dbReference type="GO" id="GO:0016705">
    <property type="term" value="F:oxidoreductase activity, acting on paired donors, with incorporation or reduction of molecular oxygen"/>
    <property type="evidence" value="ECO:0007669"/>
    <property type="project" value="InterPro"/>
</dbReference>
<dbReference type="Gene3D" id="2.60.120.620">
    <property type="entry name" value="q2cbj1_9rhob like domain"/>
    <property type="match status" value="1"/>
</dbReference>
<dbReference type="InterPro" id="IPR039210">
    <property type="entry name" value="OGFOD3"/>
</dbReference>
<dbReference type="InterPro" id="IPR005123">
    <property type="entry name" value="Oxoglu/Fe-dep_dioxygenase_dom"/>
</dbReference>
<dbReference type="InterPro" id="IPR006620">
    <property type="entry name" value="Pro_4_hyd_alph"/>
</dbReference>
<dbReference type="InterPro" id="IPR044862">
    <property type="entry name" value="Pro_4_hyd_alph_FE2OG_OXY"/>
</dbReference>
<dbReference type="PANTHER" id="PTHR14650:SF1">
    <property type="entry name" value="2-OXOGLUTARATE AND IRON-DEPENDENT OXYGENASE DOMAIN-CONTAINING PROTEIN 3"/>
    <property type="match status" value="1"/>
</dbReference>
<dbReference type="PANTHER" id="PTHR14650">
    <property type="entry name" value="PROLYL HYDROXYLASE-RELATED"/>
    <property type="match status" value="1"/>
</dbReference>
<dbReference type="Pfam" id="PF13640">
    <property type="entry name" value="2OG-FeII_Oxy_3"/>
    <property type="match status" value="1"/>
</dbReference>
<dbReference type="SMART" id="SM00702">
    <property type="entry name" value="P4Hc"/>
    <property type="match status" value="1"/>
</dbReference>
<dbReference type="PROSITE" id="PS51471">
    <property type="entry name" value="FE2OG_OXY"/>
    <property type="match status" value="1"/>
</dbReference>
<sequence length="317" mass="35565">MATRHRRRGGSAPSWAKPGKPGERPGGPKKSRGRTSWKSLLIWGVFGVTLGLMAGYYLWGELITDDSVTEVLAAQRDAVAQRFFHVPCSQDYESLKQFEACTPRKCGRAVTDSVITLQEAEKMRRLAEAGLSLGGSDGGASILDLHSGALSMGKKFVNMYRFFGDKLKDVMSDEDFNLYREVRLKIQHEIARTFNISVSSLHLTKPTFFSRMNSSEAKTAHDEYWHPHIDKVTYGSFDYTSLLYLSDYSQDFGGGRFVFIDEGANRTVEPRTGRLSFFTSGSENLHRVEKVSWGTRYAITISFTCNPEHAIGDPTWT</sequence>
<proteinExistence type="evidence at transcript level"/>
<name>OGFD3_XENTR</name>
<keyword id="KW-0223">Dioxygenase</keyword>
<keyword id="KW-0325">Glycoprotein</keyword>
<keyword id="KW-0408">Iron</keyword>
<keyword id="KW-0472">Membrane</keyword>
<keyword id="KW-0479">Metal-binding</keyword>
<keyword id="KW-0560">Oxidoreductase</keyword>
<keyword id="KW-1185">Reference proteome</keyword>
<keyword id="KW-0735">Signal-anchor</keyword>
<keyword id="KW-0812">Transmembrane</keyword>
<keyword id="KW-1133">Transmembrane helix</keyword>
<keyword id="KW-0847">Vitamin C</keyword>
<reference key="1">
    <citation type="submission" date="2004-10" db="EMBL/GenBank/DDBJ databases">
        <authorList>
            <consortium name="NIH - Xenopus Gene Collection (XGC) project"/>
        </authorList>
    </citation>
    <scope>NUCLEOTIDE SEQUENCE [LARGE SCALE MRNA]</scope>
    <source>
        <tissue>Embryo</tissue>
    </source>
</reference>